<reference key="1">
    <citation type="journal article" date="1998" name="Nature">
        <title>Deciphering the biology of Mycobacterium tuberculosis from the complete genome sequence.</title>
        <authorList>
            <person name="Cole S.T."/>
            <person name="Brosch R."/>
            <person name="Parkhill J."/>
            <person name="Garnier T."/>
            <person name="Churcher C.M."/>
            <person name="Harris D.E."/>
            <person name="Gordon S.V."/>
            <person name="Eiglmeier K."/>
            <person name="Gas S."/>
            <person name="Barry C.E. III"/>
            <person name="Tekaia F."/>
            <person name="Badcock K."/>
            <person name="Basham D."/>
            <person name="Brown D."/>
            <person name="Chillingworth T."/>
            <person name="Connor R."/>
            <person name="Davies R.M."/>
            <person name="Devlin K."/>
            <person name="Feltwell T."/>
            <person name="Gentles S."/>
            <person name="Hamlin N."/>
            <person name="Holroyd S."/>
            <person name="Hornsby T."/>
            <person name="Jagels K."/>
            <person name="Krogh A."/>
            <person name="McLean J."/>
            <person name="Moule S."/>
            <person name="Murphy L.D."/>
            <person name="Oliver S."/>
            <person name="Osborne J."/>
            <person name="Quail M.A."/>
            <person name="Rajandream M.A."/>
            <person name="Rogers J."/>
            <person name="Rutter S."/>
            <person name="Seeger K."/>
            <person name="Skelton S."/>
            <person name="Squares S."/>
            <person name="Squares R."/>
            <person name="Sulston J.E."/>
            <person name="Taylor K."/>
            <person name="Whitehead S."/>
            <person name="Barrell B.G."/>
        </authorList>
    </citation>
    <scope>NUCLEOTIDE SEQUENCE [LARGE SCALE GENOMIC DNA]</scope>
    <source>
        <strain>ATCC 25618 / H37Rv</strain>
    </source>
</reference>
<reference key="2">
    <citation type="journal article" date="1994" name="J. Bacteriol.">
        <title>Isolation of ribonucleotide reductase from Mycobacterium tuberculosis and cloning, expression, and purification of the large subunit.</title>
        <authorList>
            <person name="Yang F."/>
            <person name="Lu G."/>
            <person name="Rubin H."/>
        </authorList>
    </citation>
    <scope>NUCLEOTIDE SEQUENCE [GENOMIC DNA] OF 3-725</scope>
    <source>
        <strain>ATCC 35801 / TMC 107 / Erdman</strain>
    </source>
</reference>
<reference key="3">
    <citation type="journal article" date="1997" name="J. Bacteriol.">
        <title>Characterization of two genes encoding the Mycobacterium tuberculosis ribonucleotide reductase small subunit.</title>
        <authorList>
            <person name="Yang F."/>
            <person name="Curran S.C."/>
            <person name="Li L.S."/>
            <person name="Avarbock D."/>
            <person name="Graf J.D."/>
            <person name="Chua M.M."/>
            <person name="Lu G."/>
            <person name="Salem J."/>
            <person name="Rubin H."/>
        </authorList>
    </citation>
    <scope>CATALYTIC ACTIVITY</scope>
    <scope>ACTIVITY REGULATION</scope>
    <scope>FUNCTION IN E.COLI</scope>
    <source>
        <strain>ATCC 35801 / TMC 107 / Erdman</strain>
    </source>
</reference>
<reference key="4">
    <citation type="journal article" date="2003" name="Infect. Immun.">
        <title>Ribonucleotide reduction in Mycobacterium tuberculosis: function and expression of genes encoding class Ib and class II ribonucleotide reductases.</title>
        <authorList>
            <person name="Dawes S.S."/>
            <person name="Warner D.F."/>
            <person name="Tsenova L."/>
            <person name="Timm J."/>
            <person name="McKinney J.D."/>
            <person name="Kaplan G."/>
            <person name="Rubin H."/>
            <person name="Mizrahi V."/>
        </authorList>
    </citation>
    <scope>INDUCTION</scope>
    <source>
        <strain>ATCC 25618 / H37Rv</strain>
    </source>
</reference>
<reference key="5">
    <citation type="journal article" date="2011" name="Mol. Cell. Proteomics">
        <title>Proteogenomic analysis of Mycobacterium tuberculosis by high resolution mass spectrometry.</title>
        <authorList>
            <person name="Kelkar D.S."/>
            <person name="Kumar D."/>
            <person name="Kumar P."/>
            <person name="Balakrishnan L."/>
            <person name="Muthusamy B."/>
            <person name="Yadav A.K."/>
            <person name="Shrivastava P."/>
            <person name="Marimuthu A."/>
            <person name="Anand S."/>
            <person name="Sundaram H."/>
            <person name="Kingsbury R."/>
            <person name="Harsha H.C."/>
            <person name="Nair B."/>
            <person name="Prasad T.S."/>
            <person name="Chauhan D.S."/>
            <person name="Katoch K."/>
            <person name="Katoch V.M."/>
            <person name="Kumar P."/>
            <person name="Chaerkady R."/>
            <person name="Ramachandran S."/>
            <person name="Dash D."/>
            <person name="Pandey A."/>
        </authorList>
    </citation>
    <scope>IDENTIFICATION BY MASS SPECTROMETRY [LARGE SCALE ANALYSIS]</scope>
    <source>
        <strain>ATCC 25618 / H37Rv</strain>
    </source>
</reference>
<reference key="6">
    <citation type="journal article" date="2020" name="Mol. Microbiol.">
        <title>Depletion of the DarG antitoxin in Mycobacterium tuberculosis triggers the DNA-damage response and leads to cell death.</title>
        <authorList>
            <person name="Zaveri A."/>
            <person name="Wang R."/>
            <person name="Botella L."/>
            <person name="Sharma R."/>
            <person name="Zhu L."/>
            <person name="Wallach J.B."/>
            <person name="Song N."/>
            <person name="Jansen R.S."/>
            <person name="Rhee K.Y."/>
            <person name="Ehrt S."/>
            <person name="Schnappinger D."/>
        </authorList>
    </citation>
    <scope>SUBUNIT</scope>
    <source>
        <strain>H37Rv</strain>
    </source>
</reference>
<name>RIR1_MYCTU</name>
<gene>
    <name type="primary">nrdE</name>
    <name type="ordered locus">Rv3051c</name>
    <name type="ORF">MTV012.66c</name>
</gene>
<protein>
    <recommendedName>
        <fullName>Ribonucleoside-diphosphate reductase subunit alpha</fullName>
        <ecNumber>1.17.4.1</ecNumber>
    </recommendedName>
    <alternativeName>
        <fullName>Ribonucleotide reductase R1 subunit</fullName>
    </alternativeName>
</protein>
<dbReference type="EC" id="1.17.4.1"/>
<dbReference type="EMBL" id="AL123456">
    <property type="protein sequence ID" value="CCP45860.1"/>
    <property type="status" value="ALT_INIT"/>
    <property type="molecule type" value="Genomic_DNA"/>
</dbReference>
<dbReference type="EMBL" id="L34407">
    <property type="protein sequence ID" value="AAA64444.1"/>
    <property type="molecule type" value="Genomic_DNA"/>
</dbReference>
<dbReference type="PIR" id="F70861">
    <property type="entry name" value="F70861"/>
</dbReference>
<dbReference type="RefSeq" id="NP_217567.1">
    <property type="nucleotide sequence ID" value="NC_000962.3"/>
</dbReference>
<dbReference type="RefSeq" id="WP_003415980.1">
    <property type="nucleotide sequence ID" value="NC_000962.3"/>
</dbReference>
<dbReference type="RefSeq" id="WP_003914457.1">
    <property type="nucleotide sequence ID" value="NZ_NVQJ01000011.1"/>
</dbReference>
<dbReference type="SMR" id="P9WH75"/>
<dbReference type="FunCoup" id="P9WH75">
    <property type="interactions" value="101"/>
</dbReference>
<dbReference type="STRING" id="83332.Rv3051c"/>
<dbReference type="BindingDB" id="P9WH75"/>
<dbReference type="ChEMBL" id="CHEMBL2346487"/>
<dbReference type="PaxDb" id="83332-Rv3051c"/>
<dbReference type="DNASU" id="888869"/>
<dbReference type="GeneID" id="888869"/>
<dbReference type="KEGG" id="mtu:Rv3051c"/>
<dbReference type="TubercuList" id="Rv3051c"/>
<dbReference type="eggNOG" id="COG0209">
    <property type="taxonomic scope" value="Bacteria"/>
</dbReference>
<dbReference type="InParanoid" id="P9WH75"/>
<dbReference type="OrthoDB" id="9762933at2"/>
<dbReference type="BRENDA" id="1.17.4.1">
    <property type="organism ID" value="3445"/>
</dbReference>
<dbReference type="PRO" id="PR:P9WH75"/>
<dbReference type="Proteomes" id="UP000001584">
    <property type="component" value="Chromosome"/>
</dbReference>
<dbReference type="GO" id="GO:0005886">
    <property type="term" value="C:plasma membrane"/>
    <property type="evidence" value="ECO:0007005"/>
    <property type="project" value="MTBBASE"/>
</dbReference>
<dbReference type="GO" id="GO:0005971">
    <property type="term" value="C:ribonucleoside-diphosphate reductase complex"/>
    <property type="evidence" value="ECO:0000314"/>
    <property type="project" value="MTBBASE"/>
</dbReference>
<dbReference type="GO" id="GO:0005524">
    <property type="term" value="F:ATP binding"/>
    <property type="evidence" value="ECO:0000314"/>
    <property type="project" value="MTBBASE"/>
</dbReference>
<dbReference type="GO" id="GO:0051063">
    <property type="term" value="F:CDP reductase activity"/>
    <property type="evidence" value="ECO:0000314"/>
    <property type="project" value="MTBBASE"/>
</dbReference>
<dbReference type="GO" id="GO:0004748">
    <property type="term" value="F:ribonucleoside-diphosphate reductase activity, thioredoxin disulfide as acceptor"/>
    <property type="evidence" value="ECO:0000314"/>
    <property type="project" value="MTBBASE"/>
</dbReference>
<dbReference type="GO" id="GO:0009263">
    <property type="term" value="P:deoxyribonucleotide biosynthetic process"/>
    <property type="evidence" value="ECO:0000314"/>
    <property type="project" value="MTBBASE"/>
</dbReference>
<dbReference type="GO" id="GO:0006260">
    <property type="term" value="P:DNA replication"/>
    <property type="evidence" value="ECO:0000314"/>
    <property type="project" value="MTBBASE"/>
</dbReference>
<dbReference type="CDD" id="cd01679">
    <property type="entry name" value="RNR_I"/>
    <property type="match status" value="1"/>
</dbReference>
<dbReference type="FunFam" id="1.10.1650.20:FF:000002">
    <property type="entry name" value="Ribonucleoside-diphosphate reductase"/>
    <property type="match status" value="1"/>
</dbReference>
<dbReference type="Gene3D" id="1.10.1650.20">
    <property type="match status" value="1"/>
</dbReference>
<dbReference type="Gene3D" id="3.20.70.20">
    <property type="match status" value="1"/>
</dbReference>
<dbReference type="InterPro" id="IPR013346">
    <property type="entry name" value="NrdE_NrdA_C"/>
</dbReference>
<dbReference type="InterPro" id="IPR026459">
    <property type="entry name" value="RNR_1b_NrdE"/>
</dbReference>
<dbReference type="InterPro" id="IPR000788">
    <property type="entry name" value="RNR_lg_C"/>
</dbReference>
<dbReference type="InterPro" id="IPR013509">
    <property type="entry name" value="RNR_lsu_N"/>
</dbReference>
<dbReference type="InterPro" id="IPR013554">
    <property type="entry name" value="RNR_N"/>
</dbReference>
<dbReference type="InterPro" id="IPR008926">
    <property type="entry name" value="RNR_R1-su_N"/>
</dbReference>
<dbReference type="InterPro" id="IPR039718">
    <property type="entry name" value="Rrm1"/>
</dbReference>
<dbReference type="NCBIfam" id="TIGR02506">
    <property type="entry name" value="NrdE_NrdA"/>
    <property type="match status" value="1"/>
</dbReference>
<dbReference type="NCBIfam" id="TIGR04170">
    <property type="entry name" value="RNR_1b_NrdE"/>
    <property type="match status" value="1"/>
</dbReference>
<dbReference type="PANTHER" id="PTHR11573:SF30">
    <property type="entry name" value="RIBONUCLEOSIDE-DIPHOSPHATE REDUCTASE 2 SUBUNIT ALPHA"/>
    <property type="match status" value="1"/>
</dbReference>
<dbReference type="PANTHER" id="PTHR11573">
    <property type="entry name" value="RIBONUCLEOSIDE-DIPHOSPHATE REDUCTASE LARGE CHAIN"/>
    <property type="match status" value="1"/>
</dbReference>
<dbReference type="Pfam" id="PF02867">
    <property type="entry name" value="Ribonuc_red_lgC"/>
    <property type="match status" value="1"/>
</dbReference>
<dbReference type="Pfam" id="PF00317">
    <property type="entry name" value="Ribonuc_red_lgN"/>
    <property type="match status" value="1"/>
</dbReference>
<dbReference type="Pfam" id="PF08343">
    <property type="entry name" value="RNR_N"/>
    <property type="match status" value="1"/>
</dbReference>
<dbReference type="PRINTS" id="PR01183">
    <property type="entry name" value="RIBORDTASEM1"/>
</dbReference>
<dbReference type="SUPFAM" id="SSF51998">
    <property type="entry name" value="PFL-like glycyl radical enzymes"/>
    <property type="match status" value="1"/>
</dbReference>
<dbReference type="SUPFAM" id="SSF48168">
    <property type="entry name" value="R1 subunit of ribonucleotide reductase, N-terminal domain"/>
    <property type="match status" value="1"/>
</dbReference>
<dbReference type="PROSITE" id="PS00089">
    <property type="entry name" value="RIBORED_LARGE"/>
    <property type="match status" value="1"/>
</dbReference>
<evidence type="ECO:0000250" key="1"/>
<evidence type="ECO:0000269" key="2">
    <source>
    </source>
</evidence>
<evidence type="ECO:0000269" key="3">
    <source>
    </source>
</evidence>
<evidence type="ECO:0000269" key="4">
    <source>
    </source>
</evidence>
<evidence type="ECO:0000305" key="5"/>
<feature type="chain" id="PRO_0000187221" description="Ribonucleoside-diphosphate reductase subunit alpha">
    <location>
        <begin position="1"/>
        <end position="725"/>
    </location>
</feature>
<feature type="active site" description="Proton acceptor" evidence="1">
    <location>
        <position position="397"/>
    </location>
</feature>
<feature type="active site" description="Cysteine radical intermediate" evidence="1">
    <location>
        <position position="399"/>
    </location>
</feature>
<feature type="active site" description="Proton acceptor" evidence="1">
    <location>
        <position position="401"/>
    </location>
</feature>
<feature type="binding site" evidence="1">
    <location>
        <position position="172"/>
    </location>
    <ligand>
        <name>substrate</name>
    </ligand>
</feature>
<feature type="binding site" evidence="1">
    <location>
        <begin position="188"/>
        <end position="189"/>
    </location>
    <ligand>
        <name>substrate</name>
    </ligand>
</feature>
<feature type="binding site" evidence="1">
    <location>
        <position position="217"/>
    </location>
    <ligand>
        <name>substrate</name>
    </ligand>
</feature>
<feature type="binding site" evidence="1">
    <location>
        <begin position="397"/>
        <end position="401"/>
    </location>
    <ligand>
        <name>substrate</name>
    </ligand>
</feature>
<feature type="binding site" evidence="1">
    <location>
        <begin position="599"/>
        <end position="603"/>
    </location>
    <ligand>
        <name>substrate</name>
    </ligand>
</feature>
<feature type="site" description="Important for hydrogen atom transfer" evidence="1">
    <location>
        <position position="189"/>
    </location>
</feature>
<feature type="site" description="Allosteric effector binding" evidence="1">
    <location>
        <position position="196"/>
    </location>
</feature>
<feature type="site" description="Allosteric effector binding" evidence="1">
    <location>
        <position position="226"/>
    </location>
</feature>
<feature type="site" description="Important for hydrogen atom transfer" evidence="1">
    <location>
        <position position="426"/>
    </location>
</feature>
<feature type="site" description="Important for electron transfer" evidence="1">
    <location>
        <position position="703"/>
    </location>
</feature>
<feature type="site" description="Important for electron transfer" evidence="1">
    <location>
        <position position="704"/>
    </location>
</feature>
<feature type="site" description="Interacts with thioredoxin/glutaredoxin" evidence="1">
    <location>
        <position position="720"/>
    </location>
</feature>
<feature type="site" description="Interacts with thioredoxin/glutaredoxin" evidence="1">
    <location>
        <position position="723"/>
    </location>
</feature>
<feature type="disulfide bond" description="Redox-active" evidence="1">
    <location>
        <begin position="189"/>
        <end position="426"/>
    </location>
</feature>
<feature type="sequence conflict" description="In Ref. 2; AAA64444." evidence="5" ref="2">
    <original>AP</original>
    <variation>GA</variation>
    <location>
        <begin position="230"/>
        <end position="231"/>
    </location>
</feature>
<feature type="sequence conflict" description="In Ref. 2; AAA64444." evidence="5" ref="2">
    <original>SD</original>
    <variation>RH</variation>
    <location>
        <begin position="457"/>
        <end position="458"/>
    </location>
</feature>
<feature type="sequence conflict" description="In Ref. 2; AAA64444." evidence="5" ref="2">
    <original>I</original>
    <variation>V</variation>
    <location>
        <position position="622"/>
    </location>
</feature>
<keyword id="KW-0021">Allosteric enzyme</keyword>
<keyword id="KW-0067">ATP-binding</keyword>
<keyword id="KW-0215">Deoxyribonucleotide synthesis</keyword>
<keyword id="KW-1015">Disulfide bond</keyword>
<keyword id="KW-0547">Nucleotide-binding</keyword>
<keyword id="KW-0560">Oxidoreductase</keyword>
<keyword id="KW-1185">Reference proteome</keyword>
<organism>
    <name type="scientific">Mycobacterium tuberculosis (strain ATCC 25618 / H37Rv)</name>
    <dbReference type="NCBI Taxonomy" id="83332"/>
    <lineage>
        <taxon>Bacteria</taxon>
        <taxon>Bacillati</taxon>
        <taxon>Actinomycetota</taxon>
        <taxon>Actinomycetes</taxon>
        <taxon>Mycobacteriales</taxon>
        <taxon>Mycobacteriaceae</taxon>
        <taxon>Mycobacterium</taxon>
        <taxon>Mycobacterium tuberculosis complex</taxon>
    </lineage>
</organism>
<sequence>MPPTVIAEPVASGAHASYSGGPGETDYHALNAMLNLYDADGKIQFDKDREAAHQYFLQHVNQNTVFFHNQDEKLDYLIRENYYEREVLDQYSRNFVKTLLDRAYAKKFRFPTFLGAFKYYTSYTLKTFDGKRYLERFEDRVVMVALTLAAGDTALAELLVDEIIDGRFQPATPTFLNSGKKQRGEPVSCFLLRVEDNMESIGRSINSALQLSKRGGGVALLLTNIREHGAPIKNIENQSSGVIPIMKLLEDAFSYANQLGARQGAGAVYLHAHHPDIYRFLDTKRENADEKIRIKTLSLGVVIPDITFELAKRNDDMYLFSPYDVERVYGVPFADISVTEKYYEMVDDARIRKTKIKAREFFQTLAELQFESGYPYIMFEDTVNRANPIDGKITHSNLCSEILQVSTPSLFNEDLSYAKVGKDISCNLGSLNIAKTMDSPDFAQTIEVAIRALTAVSDQTHIKSVPSIEQGNNDSHAIGLGQMNLHGYLARERIFYGSDEGIDFTNIYFYTVLYHALRASNRIAIERGTHFKGFERSKYASGEFFDKYTDQIWEPKTQKVRQLFADAGIRIPTQDDWRRLKESVQAHGIYNQNLQAVPPTGSISYINHSTSSIHPIVSKVEIRKEGKIGRVYYPAPYMTNDNLEYYEDAYEIGYEKIIDTYAAATQHVDQGLSLTLFFKDTATTRDVNKAQIYAWRKGIKTLYYIRLRQMALEGTEVEGCVSCML</sequence>
<comment type="function">
    <text evidence="4">Provides the precursors necessary for DNA synthesis. Catalyzes the biosynthesis of deoxyribonucleotides from the corresponding ribonucleotides. When coexpressed in E.coli with nrdF2 the 2 proteins complement a temperature-sensitive E.coli mutant, however coexpression with nrdF1 does not complement.</text>
</comment>
<comment type="catalytic activity">
    <reaction evidence="4">
        <text>a 2'-deoxyribonucleoside 5'-diphosphate + [thioredoxin]-disulfide + H2O = a ribonucleoside 5'-diphosphate + [thioredoxin]-dithiol</text>
        <dbReference type="Rhea" id="RHEA:23252"/>
        <dbReference type="Rhea" id="RHEA-COMP:10698"/>
        <dbReference type="Rhea" id="RHEA-COMP:10700"/>
        <dbReference type="ChEBI" id="CHEBI:15377"/>
        <dbReference type="ChEBI" id="CHEBI:29950"/>
        <dbReference type="ChEBI" id="CHEBI:50058"/>
        <dbReference type="ChEBI" id="CHEBI:57930"/>
        <dbReference type="ChEBI" id="CHEBI:73316"/>
        <dbReference type="EC" id="1.17.4.1"/>
    </reaction>
</comment>
<comment type="activity regulation">
    <text evidence="1 4">Under complex allosteric control mediated by deoxynucleoside triphosphates and ATP binding. The type of nucleotide bound at the specificity site determines substrate preference. It seems probable that ATP makes the enzyme reduce CDP and UDP, dGTP favors ADP reduction and dTTP favors GDP reduction (By similarity). CDP reduction is stimulated by dATP.</text>
</comment>
<comment type="subunit">
    <text evidence="3 5">Tetramer of two alpha and two beta subunits (Probable). Co-immunoprecipitates with DarG in the presence and absence of darT (PubMed:32634279).</text>
</comment>
<comment type="induction">
    <text evidence="2">Initially decreases as oxygen levels drop, then rises again.</text>
</comment>
<comment type="similarity">
    <text evidence="5">Belongs to the ribonucleoside diphosphate reductase large chain family.</text>
</comment>
<comment type="sequence caution" evidence="5">
    <conflict type="erroneous initiation">
        <sequence resource="EMBL-CDS" id="CCP45860"/>
    </conflict>
    <text>Truncated N-terminus.</text>
</comment>
<proteinExistence type="evidence at protein level"/>
<accession>P9WH75</accession>
<accession>L0TD07</accession>
<accession>O53296</accession>
<accession>P0A5W8</accession>
<accession>P50640</accession>